<evidence type="ECO:0000255" key="1">
    <source>
        <dbReference type="HAMAP-Rule" id="MF_00198"/>
    </source>
</evidence>
<name>SPEE_SHOC1</name>
<dbReference type="EC" id="2.5.1.16" evidence="1"/>
<dbReference type="EMBL" id="AP006627">
    <property type="protein sequence ID" value="BAD66429.1"/>
    <property type="molecule type" value="Genomic_DNA"/>
</dbReference>
<dbReference type="RefSeq" id="WP_011248732.1">
    <property type="nucleotide sequence ID" value="NC_006582.1"/>
</dbReference>
<dbReference type="SMR" id="Q5WB31"/>
<dbReference type="STRING" id="66692.ABC3898"/>
<dbReference type="KEGG" id="bcl:ABC3898"/>
<dbReference type="eggNOG" id="COG0421">
    <property type="taxonomic scope" value="Bacteria"/>
</dbReference>
<dbReference type="HOGENOM" id="CLU_048199_0_0_9"/>
<dbReference type="OrthoDB" id="9793120at2"/>
<dbReference type="UniPathway" id="UPA00248">
    <property type="reaction ID" value="UER00314"/>
</dbReference>
<dbReference type="Proteomes" id="UP000001168">
    <property type="component" value="Chromosome"/>
</dbReference>
<dbReference type="GO" id="GO:0005829">
    <property type="term" value="C:cytosol"/>
    <property type="evidence" value="ECO:0007669"/>
    <property type="project" value="TreeGrafter"/>
</dbReference>
<dbReference type="GO" id="GO:0004766">
    <property type="term" value="F:spermidine synthase activity"/>
    <property type="evidence" value="ECO:0007669"/>
    <property type="project" value="UniProtKB-UniRule"/>
</dbReference>
<dbReference type="GO" id="GO:0008295">
    <property type="term" value="P:spermidine biosynthetic process"/>
    <property type="evidence" value="ECO:0007669"/>
    <property type="project" value="UniProtKB-UniRule"/>
</dbReference>
<dbReference type="CDD" id="cd02440">
    <property type="entry name" value="AdoMet_MTases"/>
    <property type="match status" value="1"/>
</dbReference>
<dbReference type="FunFam" id="3.40.50.150:FF:000056">
    <property type="entry name" value="Polyamine aminopropyltransferase"/>
    <property type="match status" value="1"/>
</dbReference>
<dbReference type="Gene3D" id="2.30.140.10">
    <property type="entry name" value="Spermidine synthase, tetramerisation domain"/>
    <property type="match status" value="1"/>
</dbReference>
<dbReference type="Gene3D" id="3.40.50.150">
    <property type="entry name" value="Vaccinia Virus protein VP39"/>
    <property type="match status" value="1"/>
</dbReference>
<dbReference type="HAMAP" id="MF_00198">
    <property type="entry name" value="Spermidine_synth"/>
    <property type="match status" value="1"/>
</dbReference>
<dbReference type="InterPro" id="IPR030374">
    <property type="entry name" value="PABS"/>
</dbReference>
<dbReference type="InterPro" id="IPR030373">
    <property type="entry name" value="PABS_CS"/>
</dbReference>
<dbReference type="InterPro" id="IPR029063">
    <property type="entry name" value="SAM-dependent_MTases_sf"/>
</dbReference>
<dbReference type="InterPro" id="IPR001045">
    <property type="entry name" value="Spermi_synthase"/>
</dbReference>
<dbReference type="InterPro" id="IPR035246">
    <property type="entry name" value="Spermidine_synt_N"/>
</dbReference>
<dbReference type="InterPro" id="IPR037163">
    <property type="entry name" value="Spermidine_synt_N_sf"/>
</dbReference>
<dbReference type="NCBIfam" id="NF037959">
    <property type="entry name" value="MFS_SpdSyn"/>
    <property type="match status" value="1"/>
</dbReference>
<dbReference type="NCBIfam" id="NF002010">
    <property type="entry name" value="PRK00811.1"/>
    <property type="match status" value="1"/>
</dbReference>
<dbReference type="NCBIfam" id="TIGR00417">
    <property type="entry name" value="speE"/>
    <property type="match status" value="1"/>
</dbReference>
<dbReference type="PANTHER" id="PTHR11558:SF11">
    <property type="entry name" value="SPERMIDINE SYNTHASE"/>
    <property type="match status" value="1"/>
</dbReference>
<dbReference type="PANTHER" id="PTHR11558">
    <property type="entry name" value="SPERMIDINE/SPERMINE SYNTHASE"/>
    <property type="match status" value="1"/>
</dbReference>
<dbReference type="Pfam" id="PF17284">
    <property type="entry name" value="Spermine_synt_N"/>
    <property type="match status" value="1"/>
</dbReference>
<dbReference type="Pfam" id="PF01564">
    <property type="entry name" value="Spermine_synth"/>
    <property type="match status" value="1"/>
</dbReference>
<dbReference type="SUPFAM" id="SSF53335">
    <property type="entry name" value="S-adenosyl-L-methionine-dependent methyltransferases"/>
    <property type="match status" value="1"/>
</dbReference>
<dbReference type="PROSITE" id="PS01330">
    <property type="entry name" value="PABS_1"/>
    <property type="match status" value="1"/>
</dbReference>
<dbReference type="PROSITE" id="PS51006">
    <property type="entry name" value="PABS_2"/>
    <property type="match status" value="1"/>
</dbReference>
<keyword id="KW-0963">Cytoplasm</keyword>
<keyword id="KW-0620">Polyamine biosynthesis</keyword>
<keyword id="KW-1185">Reference proteome</keyword>
<keyword id="KW-0745">Spermidine biosynthesis</keyword>
<keyword id="KW-0808">Transferase</keyword>
<protein>
    <recommendedName>
        <fullName evidence="1">Polyamine aminopropyltransferase</fullName>
    </recommendedName>
    <alternativeName>
        <fullName evidence="1">Putrescine aminopropyltransferase</fullName>
        <shortName evidence="1">PAPT</shortName>
    </alternativeName>
    <alternativeName>
        <fullName evidence="1">Spermidine synthase</fullName>
        <shortName evidence="1">SPDS</shortName>
        <shortName evidence="1">SPDSY</shortName>
        <ecNumber evidence="1">2.5.1.16</ecNumber>
    </alternativeName>
</protein>
<reference key="1">
    <citation type="submission" date="2003-10" db="EMBL/GenBank/DDBJ databases">
        <title>The complete genome sequence of the alkaliphilic Bacillus clausii KSM-K16.</title>
        <authorList>
            <person name="Takaki Y."/>
            <person name="Kageyama Y."/>
            <person name="Shimamura S."/>
            <person name="Suzuki H."/>
            <person name="Nishi S."/>
            <person name="Hatada Y."/>
            <person name="Kawai S."/>
            <person name="Ito S."/>
            <person name="Horikoshi K."/>
        </authorList>
    </citation>
    <scope>NUCLEOTIDE SEQUENCE [LARGE SCALE GENOMIC DNA]</scope>
    <source>
        <strain>KSM-K16</strain>
    </source>
</reference>
<gene>
    <name evidence="1" type="primary">speE</name>
    <name type="ordered locus">ABC3898</name>
</gene>
<comment type="function">
    <text evidence="1">Catalyzes the irreversible transfer of a propylamine group from the amino donor S-adenosylmethioninamine (decarboxy-AdoMet) to putrescine (1,4-diaminobutane) to yield spermidine.</text>
</comment>
<comment type="catalytic activity">
    <reaction evidence="1">
        <text>S-adenosyl 3-(methylsulfanyl)propylamine + putrescine = S-methyl-5'-thioadenosine + spermidine + H(+)</text>
        <dbReference type="Rhea" id="RHEA:12721"/>
        <dbReference type="ChEBI" id="CHEBI:15378"/>
        <dbReference type="ChEBI" id="CHEBI:17509"/>
        <dbReference type="ChEBI" id="CHEBI:57443"/>
        <dbReference type="ChEBI" id="CHEBI:57834"/>
        <dbReference type="ChEBI" id="CHEBI:326268"/>
        <dbReference type="EC" id="2.5.1.16"/>
    </reaction>
</comment>
<comment type="pathway">
    <text evidence="1">Amine and polyamine biosynthesis; spermidine biosynthesis; spermidine from putrescine: step 1/1.</text>
</comment>
<comment type="subunit">
    <text evidence="1">Homodimer or homotetramer.</text>
</comment>
<comment type="subcellular location">
    <subcellularLocation>
        <location evidence="1">Cytoplasm</location>
    </subcellularLocation>
</comment>
<comment type="similarity">
    <text evidence="1">Belongs to the spermidine/spermine synthase family.</text>
</comment>
<sequence>MEFWFTEKQTERFGITMKIKRTLHTEKTDFQQLDMVETEEFGNMLLLDGMVMTTEKDEFVYHEMVTHVPLFTHPNPKHVLVVGGGDGGAIREILKHPSVEKATLVDIDGKVIEYSKTYLPTIACALEDERVDVKVADGFMHIAQSANEYDVIMVDSTEPVGPAAKLFERGFYEGISKALKEDGIFVAQTDNPWFHQELVSNVYKDVKEIFPITRLYTANIPTYPSGMWTFTIGSKKHDPLAVEATRFHDVQTKYYTPDIHRAAFVLPKFVQDLLK</sequence>
<accession>Q5WB31</accession>
<organism>
    <name type="scientific">Shouchella clausii (strain KSM-K16)</name>
    <name type="common">Alkalihalobacillus clausii</name>
    <dbReference type="NCBI Taxonomy" id="66692"/>
    <lineage>
        <taxon>Bacteria</taxon>
        <taxon>Bacillati</taxon>
        <taxon>Bacillota</taxon>
        <taxon>Bacilli</taxon>
        <taxon>Bacillales</taxon>
        <taxon>Bacillaceae</taxon>
        <taxon>Shouchella</taxon>
    </lineage>
</organism>
<proteinExistence type="inferred from homology"/>
<feature type="chain" id="PRO_1000197463" description="Polyamine aminopropyltransferase">
    <location>
        <begin position="1"/>
        <end position="275"/>
    </location>
</feature>
<feature type="domain" description="PABS" evidence="1">
    <location>
        <begin position="2"/>
        <end position="235"/>
    </location>
</feature>
<feature type="active site" description="Proton acceptor" evidence="1">
    <location>
        <position position="155"/>
    </location>
</feature>
<feature type="binding site" evidence="1">
    <location>
        <position position="31"/>
    </location>
    <ligand>
        <name>S-methyl-5'-thioadenosine</name>
        <dbReference type="ChEBI" id="CHEBI:17509"/>
    </ligand>
</feature>
<feature type="binding site" evidence="1">
    <location>
        <position position="62"/>
    </location>
    <ligand>
        <name>spermidine</name>
        <dbReference type="ChEBI" id="CHEBI:57834"/>
    </ligand>
</feature>
<feature type="binding site" evidence="1">
    <location>
        <position position="86"/>
    </location>
    <ligand>
        <name>spermidine</name>
        <dbReference type="ChEBI" id="CHEBI:57834"/>
    </ligand>
</feature>
<feature type="binding site" evidence="1">
    <location>
        <position position="106"/>
    </location>
    <ligand>
        <name>S-methyl-5'-thioadenosine</name>
        <dbReference type="ChEBI" id="CHEBI:17509"/>
    </ligand>
</feature>
<feature type="binding site" evidence="1">
    <location>
        <begin position="137"/>
        <end position="138"/>
    </location>
    <ligand>
        <name>S-methyl-5'-thioadenosine</name>
        <dbReference type="ChEBI" id="CHEBI:17509"/>
    </ligand>
</feature>
<feature type="binding site" evidence="1">
    <location>
        <begin position="155"/>
        <end position="158"/>
    </location>
    <ligand>
        <name>spermidine</name>
        <dbReference type="ChEBI" id="CHEBI:57834"/>
    </ligand>
</feature>
<feature type="binding site" evidence="1">
    <location>
        <position position="162"/>
    </location>
    <ligand>
        <name>S-methyl-5'-thioadenosine</name>
        <dbReference type="ChEBI" id="CHEBI:17509"/>
    </ligand>
</feature>